<comment type="function">
    <text evidence="1">NAD-binding protein involved in the addition of a carboxymethylaminomethyl (cmnm) group at the wobble position (U34) of certain tRNAs, forming tRNA-cmnm(5)s(2)U34.</text>
</comment>
<comment type="cofactor">
    <cofactor evidence="1">
        <name>FAD</name>
        <dbReference type="ChEBI" id="CHEBI:57692"/>
    </cofactor>
</comment>
<comment type="subunit">
    <text evidence="1">Homodimer. Heterotetramer of two MnmE and two MnmG subunits.</text>
</comment>
<comment type="subcellular location">
    <subcellularLocation>
        <location evidence="1">Cytoplasm</location>
    </subcellularLocation>
</comment>
<comment type="similarity">
    <text evidence="1">Belongs to the MnmG family.</text>
</comment>
<keyword id="KW-0963">Cytoplasm</keyword>
<keyword id="KW-0274">FAD</keyword>
<keyword id="KW-0285">Flavoprotein</keyword>
<keyword id="KW-0520">NAD</keyword>
<keyword id="KW-0819">tRNA processing</keyword>
<protein>
    <recommendedName>
        <fullName evidence="1">tRNA uridine 5-carboxymethylaminomethyl modification enzyme MnmG</fullName>
    </recommendedName>
    <alternativeName>
        <fullName evidence="1">Glucose-inhibited division protein A</fullName>
    </alternativeName>
</protein>
<dbReference type="EMBL" id="BA000018">
    <property type="protein sequence ID" value="BAB43808.1"/>
    <property type="molecule type" value="Genomic_DNA"/>
</dbReference>
<dbReference type="PIR" id="F90080">
    <property type="entry name" value="F90080"/>
</dbReference>
<dbReference type="RefSeq" id="WP_000249657.1">
    <property type="nucleotide sequence ID" value="NC_002745.2"/>
</dbReference>
<dbReference type="SMR" id="P64230"/>
<dbReference type="EnsemblBacteria" id="BAB43808">
    <property type="protein sequence ID" value="BAB43808"/>
    <property type="gene ID" value="BAB43808"/>
</dbReference>
<dbReference type="KEGG" id="sau:SA2500"/>
<dbReference type="HOGENOM" id="CLU_007831_2_2_9"/>
<dbReference type="GO" id="GO:0005829">
    <property type="term" value="C:cytosol"/>
    <property type="evidence" value="ECO:0007669"/>
    <property type="project" value="TreeGrafter"/>
</dbReference>
<dbReference type="GO" id="GO:0050660">
    <property type="term" value="F:flavin adenine dinucleotide binding"/>
    <property type="evidence" value="ECO:0007669"/>
    <property type="project" value="UniProtKB-UniRule"/>
</dbReference>
<dbReference type="GO" id="GO:0030488">
    <property type="term" value="P:tRNA methylation"/>
    <property type="evidence" value="ECO:0007669"/>
    <property type="project" value="TreeGrafter"/>
</dbReference>
<dbReference type="GO" id="GO:0002098">
    <property type="term" value="P:tRNA wobble uridine modification"/>
    <property type="evidence" value="ECO:0007669"/>
    <property type="project" value="InterPro"/>
</dbReference>
<dbReference type="FunFam" id="1.10.10.1800:FF:000001">
    <property type="entry name" value="tRNA uridine 5-carboxymethylaminomethyl modification enzyme MnmG"/>
    <property type="match status" value="1"/>
</dbReference>
<dbReference type="FunFam" id="1.10.150.570:FF:000001">
    <property type="entry name" value="tRNA uridine 5-carboxymethylaminomethyl modification enzyme MnmG"/>
    <property type="match status" value="1"/>
</dbReference>
<dbReference type="FunFam" id="3.50.50.60:FF:000002">
    <property type="entry name" value="tRNA uridine 5-carboxymethylaminomethyl modification enzyme MnmG"/>
    <property type="match status" value="1"/>
</dbReference>
<dbReference type="FunFam" id="3.50.50.60:FF:000063">
    <property type="entry name" value="tRNA uridine 5-carboxymethylaminomethyl modification enzyme MnmG"/>
    <property type="match status" value="1"/>
</dbReference>
<dbReference type="Gene3D" id="3.50.50.60">
    <property type="entry name" value="FAD/NAD(P)-binding domain"/>
    <property type="match status" value="2"/>
</dbReference>
<dbReference type="Gene3D" id="1.10.150.570">
    <property type="entry name" value="GidA associated domain, C-terminal subdomain"/>
    <property type="match status" value="1"/>
</dbReference>
<dbReference type="Gene3D" id="1.10.10.1800">
    <property type="entry name" value="tRNA uridine 5-carboxymethylaminomethyl modification enzyme MnmG/GidA"/>
    <property type="match status" value="1"/>
</dbReference>
<dbReference type="HAMAP" id="MF_00129">
    <property type="entry name" value="MnmG_GidA"/>
    <property type="match status" value="1"/>
</dbReference>
<dbReference type="InterPro" id="IPR036188">
    <property type="entry name" value="FAD/NAD-bd_sf"/>
</dbReference>
<dbReference type="InterPro" id="IPR049312">
    <property type="entry name" value="GIDA_C_N"/>
</dbReference>
<dbReference type="InterPro" id="IPR004416">
    <property type="entry name" value="MnmG"/>
</dbReference>
<dbReference type="InterPro" id="IPR002218">
    <property type="entry name" value="MnmG-rel"/>
</dbReference>
<dbReference type="InterPro" id="IPR020595">
    <property type="entry name" value="MnmG-rel_CS"/>
</dbReference>
<dbReference type="InterPro" id="IPR026904">
    <property type="entry name" value="MnmG_C"/>
</dbReference>
<dbReference type="InterPro" id="IPR047001">
    <property type="entry name" value="MnmG_C_subdom"/>
</dbReference>
<dbReference type="InterPro" id="IPR044920">
    <property type="entry name" value="MnmG_C_subdom_sf"/>
</dbReference>
<dbReference type="InterPro" id="IPR040131">
    <property type="entry name" value="MnmG_N"/>
</dbReference>
<dbReference type="NCBIfam" id="TIGR00136">
    <property type="entry name" value="mnmG_gidA"/>
    <property type="match status" value="1"/>
</dbReference>
<dbReference type="PANTHER" id="PTHR11806">
    <property type="entry name" value="GLUCOSE INHIBITED DIVISION PROTEIN A"/>
    <property type="match status" value="1"/>
</dbReference>
<dbReference type="PANTHER" id="PTHR11806:SF0">
    <property type="entry name" value="PROTEIN MTO1 HOMOLOG, MITOCHONDRIAL"/>
    <property type="match status" value="1"/>
</dbReference>
<dbReference type="Pfam" id="PF01134">
    <property type="entry name" value="GIDA"/>
    <property type="match status" value="1"/>
</dbReference>
<dbReference type="Pfam" id="PF21680">
    <property type="entry name" value="GIDA_C_1st"/>
    <property type="match status" value="1"/>
</dbReference>
<dbReference type="Pfam" id="PF13932">
    <property type="entry name" value="SAM_GIDA_C"/>
    <property type="match status" value="1"/>
</dbReference>
<dbReference type="PRINTS" id="PR00411">
    <property type="entry name" value="PNDRDTASEI"/>
</dbReference>
<dbReference type="SMART" id="SM01228">
    <property type="entry name" value="GIDA_assoc_3"/>
    <property type="match status" value="1"/>
</dbReference>
<dbReference type="SUPFAM" id="SSF51905">
    <property type="entry name" value="FAD/NAD(P)-binding domain"/>
    <property type="match status" value="1"/>
</dbReference>
<dbReference type="PROSITE" id="PS01280">
    <property type="entry name" value="GIDA_1"/>
    <property type="match status" value="1"/>
</dbReference>
<dbReference type="PROSITE" id="PS01281">
    <property type="entry name" value="GIDA_2"/>
    <property type="match status" value="1"/>
</dbReference>
<evidence type="ECO:0000255" key="1">
    <source>
        <dbReference type="HAMAP-Rule" id="MF_00129"/>
    </source>
</evidence>
<accession>P64230</accession>
<accession>Q99QT4</accession>
<organism>
    <name type="scientific">Staphylococcus aureus (strain N315)</name>
    <dbReference type="NCBI Taxonomy" id="158879"/>
    <lineage>
        <taxon>Bacteria</taxon>
        <taxon>Bacillati</taxon>
        <taxon>Bacillota</taxon>
        <taxon>Bacilli</taxon>
        <taxon>Bacillales</taxon>
        <taxon>Staphylococcaceae</taxon>
        <taxon>Staphylococcus</taxon>
    </lineage>
</organism>
<reference key="1">
    <citation type="journal article" date="2001" name="Lancet">
        <title>Whole genome sequencing of meticillin-resistant Staphylococcus aureus.</title>
        <authorList>
            <person name="Kuroda M."/>
            <person name="Ohta T."/>
            <person name="Uchiyama I."/>
            <person name="Baba T."/>
            <person name="Yuzawa H."/>
            <person name="Kobayashi I."/>
            <person name="Cui L."/>
            <person name="Oguchi A."/>
            <person name="Aoki K."/>
            <person name="Nagai Y."/>
            <person name="Lian J.-Q."/>
            <person name="Ito T."/>
            <person name="Kanamori M."/>
            <person name="Matsumaru H."/>
            <person name="Maruyama A."/>
            <person name="Murakami H."/>
            <person name="Hosoyama A."/>
            <person name="Mizutani-Ui Y."/>
            <person name="Takahashi N.K."/>
            <person name="Sawano T."/>
            <person name="Inoue R."/>
            <person name="Kaito C."/>
            <person name="Sekimizu K."/>
            <person name="Hirakawa H."/>
            <person name="Kuhara S."/>
            <person name="Goto S."/>
            <person name="Yabuzaki J."/>
            <person name="Kanehisa M."/>
            <person name="Yamashita A."/>
            <person name="Oshima K."/>
            <person name="Furuya K."/>
            <person name="Yoshino C."/>
            <person name="Shiba T."/>
            <person name="Hattori M."/>
            <person name="Ogasawara N."/>
            <person name="Hayashi H."/>
            <person name="Hiramatsu K."/>
        </authorList>
    </citation>
    <scope>NUCLEOTIDE SEQUENCE [LARGE SCALE GENOMIC DNA]</scope>
    <source>
        <strain>N315</strain>
    </source>
</reference>
<reference key="2">
    <citation type="submission" date="2007-10" db="UniProtKB">
        <title>Shotgun proteomic analysis of total and membrane protein extracts of S. aureus strain N315.</title>
        <authorList>
            <person name="Vaezzadeh A.R."/>
            <person name="Deshusses J."/>
            <person name="Lescuyer P."/>
            <person name="Hochstrasser D.F."/>
        </authorList>
    </citation>
    <scope>IDENTIFICATION BY MASS SPECTROMETRY [LARGE SCALE ANALYSIS]</scope>
    <source>
        <strain>N315</strain>
    </source>
</reference>
<gene>
    <name evidence="1" type="primary">mnmG</name>
    <name evidence="1" type="synonym">gidA</name>
    <name type="ordered locus">SA2500</name>
</gene>
<proteinExistence type="evidence at protein level"/>
<name>MNMG_STAAN</name>
<sequence>MVQEYDVIVIGAGHAGVEAGLASARRGAKTLMLTINLDNIAFMPCNPSVGGPAKGIVVREIDALGGQMAKTIDKTHIQMRMLNTGKGPAVRALRAQADKVLYQQEMKRVIEDEENLHIMQGMVDELIIEDNEVKGVRTNIGTEYLSKAVIITTGTFLRGEIILGNMKYSSGPNHQLPSITLSDNLRELGFDIVRFKTGTPPRVNSKTIDYSKTEIQPGDDVGRAFSFETTEYILDQLPCWLTYTNAETHKVIDDNLHLSAMYSGMIKGTGPRYCPSIEDKFVRFNDKPRHQLFLEPEGRNTNEVYVQGLSTSLPEHVQRQMLETIPGLEKADMMRAGYAIEYDAIVPTQLWPTLETKMIKNLYTAGQINGTSGYEEAAGQGLMAGINAAGKVLNTGEKILSRSDAYIGVLIDDLVTKGTNEPYRLLTSRAEYRLLLRHDNADLRLTDMGYELGMISEERYARFNEKRQQIDAEIKRLSDIRIKPNEHTQAIIEQHGGSRLKDGILAIDLLRRPEMTYDIILEILEEEHQLNADVEEQVEIQTKYEGYINKSLQQVEKVKRMEEKKIPEDLDYSKIDSLATEAREKLSEVKPLNIAQASRISGVNPADISILLIYLEQGKLQRVSD</sequence>
<feature type="chain" id="PRO_0000117180" description="tRNA uridine 5-carboxymethylaminomethyl modification enzyme MnmG">
    <location>
        <begin position="1"/>
        <end position="625"/>
    </location>
</feature>
<feature type="binding site" evidence="1">
    <location>
        <begin position="11"/>
        <end position="16"/>
    </location>
    <ligand>
        <name>FAD</name>
        <dbReference type="ChEBI" id="CHEBI:57692"/>
    </ligand>
</feature>
<feature type="binding site" evidence="1">
    <location>
        <position position="123"/>
    </location>
    <ligand>
        <name>FAD</name>
        <dbReference type="ChEBI" id="CHEBI:57692"/>
    </ligand>
</feature>
<feature type="binding site" evidence="1">
    <location>
        <position position="178"/>
    </location>
    <ligand>
        <name>FAD</name>
        <dbReference type="ChEBI" id="CHEBI:57692"/>
    </ligand>
</feature>
<feature type="binding site" evidence="1">
    <location>
        <begin position="270"/>
        <end position="284"/>
    </location>
    <ligand>
        <name>NAD(+)</name>
        <dbReference type="ChEBI" id="CHEBI:57540"/>
    </ligand>
</feature>
<feature type="binding site" evidence="1">
    <location>
        <position position="367"/>
    </location>
    <ligand>
        <name>FAD</name>
        <dbReference type="ChEBI" id="CHEBI:57692"/>
    </ligand>
</feature>